<name>C513D_DICDI</name>
<evidence type="ECO:0000250" key="1"/>
<evidence type="ECO:0000255" key="2"/>
<evidence type="ECO:0000305" key="3"/>
<dbReference type="EC" id="1.14.-.-"/>
<dbReference type="EMBL" id="AAFI02000032">
    <property type="protein sequence ID" value="EAL67561.1"/>
    <property type="molecule type" value="Genomic_DNA"/>
</dbReference>
<dbReference type="RefSeq" id="XP_641539.1">
    <property type="nucleotide sequence ID" value="XM_636447.1"/>
</dbReference>
<dbReference type="SMR" id="Q54WB9"/>
<dbReference type="STRING" id="44689.Q54WB9"/>
<dbReference type="PaxDb" id="44689-DDB0232341"/>
<dbReference type="EnsemblProtists" id="EAL67561">
    <property type="protein sequence ID" value="EAL67561"/>
    <property type="gene ID" value="DDB_G0279763"/>
</dbReference>
<dbReference type="GeneID" id="8622212"/>
<dbReference type="KEGG" id="ddi:DDB_G0279763"/>
<dbReference type="dictyBase" id="DDB_G0279763">
    <property type="gene designation" value="cyp513D1"/>
</dbReference>
<dbReference type="VEuPathDB" id="AmoebaDB:DDB_G0279763"/>
<dbReference type="eggNOG" id="KOG0156">
    <property type="taxonomic scope" value="Eukaryota"/>
</dbReference>
<dbReference type="HOGENOM" id="CLU_001570_22_0_1"/>
<dbReference type="InParanoid" id="Q54WB9"/>
<dbReference type="OMA" id="WTLGTLH"/>
<dbReference type="PhylomeDB" id="Q54WB9"/>
<dbReference type="PRO" id="PR:Q54WB9"/>
<dbReference type="Proteomes" id="UP000002195">
    <property type="component" value="Chromosome 3"/>
</dbReference>
<dbReference type="GO" id="GO:0016020">
    <property type="term" value="C:membrane"/>
    <property type="evidence" value="ECO:0007669"/>
    <property type="project" value="UniProtKB-SubCell"/>
</dbReference>
<dbReference type="GO" id="GO:0020037">
    <property type="term" value="F:heme binding"/>
    <property type="evidence" value="ECO:0007669"/>
    <property type="project" value="InterPro"/>
</dbReference>
<dbReference type="GO" id="GO:0005506">
    <property type="term" value="F:iron ion binding"/>
    <property type="evidence" value="ECO:0007669"/>
    <property type="project" value="InterPro"/>
</dbReference>
<dbReference type="GO" id="GO:0004497">
    <property type="term" value="F:monooxygenase activity"/>
    <property type="evidence" value="ECO:0007669"/>
    <property type="project" value="UniProtKB-KW"/>
</dbReference>
<dbReference type="GO" id="GO:0016705">
    <property type="term" value="F:oxidoreductase activity, acting on paired donors, with incorporation or reduction of molecular oxygen"/>
    <property type="evidence" value="ECO:0007669"/>
    <property type="project" value="InterPro"/>
</dbReference>
<dbReference type="CDD" id="cd20617">
    <property type="entry name" value="CYP1_2-like"/>
    <property type="match status" value="1"/>
</dbReference>
<dbReference type="Gene3D" id="1.10.630.10">
    <property type="entry name" value="Cytochrome P450"/>
    <property type="match status" value="1"/>
</dbReference>
<dbReference type="InterPro" id="IPR001128">
    <property type="entry name" value="Cyt_P450"/>
</dbReference>
<dbReference type="InterPro" id="IPR017972">
    <property type="entry name" value="Cyt_P450_CS"/>
</dbReference>
<dbReference type="InterPro" id="IPR002401">
    <property type="entry name" value="Cyt_P450_E_grp-I"/>
</dbReference>
<dbReference type="InterPro" id="IPR036396">
    <property type="entry name" value="Cyt_P450_sf"/>
</dbReference>
<dbReference type="PANTHER" id="PTHR24303:SF8">
    <property type="entry name" value="CYTOCHROME P450 513D1-RELATED"/>
    <property type="match status" value="1"/>
</dbReference>
<dbReference type="PANTHER" id="PTHR24303">
    <property type="entry name" value="HEME-BINDING MONOOXYGENASE FAMILY"/>
    <property type="match status" value="1"/>
</dbReference>
<dbReference type="Pfam" id="PF00067">
    <property type="entry name" value="p450"/>
    <property type="match status" value="1"/>
</dbReference>
<dbReference type="PRINTS" id="PR00463">
    <property type="entry name" value="EP450I"/>
</dbReference>
<dbReference type="PRINTS" id="PR00385">
    <property type="entry name" value="P450"/>
</dbReference>
<dbReference type="SUPFAM" id="SSF48264">
    <property type="entry name" value="Cytochrome P450"/>
    <property type="match status" value="1"/>
</dbReference>
<dbReference type="PROSITE" id="PS00086">
    <property type="entry name" value="CYTOCHROME_P450"/>
    <property type="match status" value="1"/>
</dbReference>
<proteinExistence type="inferred from homology"/>
<reference key="1">
    <citation type="journal article" date="2005" name="Nature">
        <title>The genome of the social amoeba Dictyostelium discoideum.</title>
        <authorList>
            <person name="Eichinger L."/>
            <person name="Pachebat J.A."/>
            <person name="Gloeckner G."/>
            <person name="Rajandream M.A."/>
            <person name="Sucgang R."/>
            <person name="Berriman M."/>
            <person name="Song J."/>
            <person name="Olsen R."/>
            <person name="Szafranski K."/>
            <person name="Xu Q."/>
            <person name="Tunggal B."/>
            <person name="Kummerfeld S."/>
            <person name="Madera M."/>
            <person name="Konfortov B.A."/>
            <person name="Rivero F."/>
            <person name="Bankier A.T."/>
            <person name="Lehmann R."/>
            <person name="Hamlin N."/>
            <person name="Davies R."/>
            <person name="Gaudet P."/>
            <person name="Fey P."/>
            <person name="Pilcher K."/>
            <person name="Chen G."/>
            <person name="Saunders D."/>
            <person name="Sodergren E.J."/>
            <person name="Davis P."/>
            <person name="Kerhornou A."/>
            <person name="Nie X."/>
            <person name="Hall N."/>
            <person name="Anjard C."/>
            <person name="Hemphill L."/>
            <person name="Bason N."/>
            <person name="Farbrother P."/>
            <person name="Desany B."/>
            <person name="Just E."/>
            <person name="Morio T."/>
            <person name="Rost R."/>
            <person name="Churcher C.M."/>
            <person name="Cooper J."/>
            <person name="Haydock S."/>
            <person name="van Driessche N."/>
            <person name="Cronin A."/>
            <person name="Goodhead I."/>
            <person name="Muzny D.M."/>
            <person name="Mourier T."/>
            <person name="Pain A."/>
            <person name="Lu M."/>
            <person name="Harper D."/>
            <person name="Lindsay R."/>
            <person name="Hauser H."/>
            <person name="James K.D."/>
            <person name="Quiles M."/>
            <person name="Madan Babu M."/>
            <person name="Saito T."/>
            <person name="Buchrieser C."/>
            <person name="Wardroper A."/>
            <person name="Felder M."/>
            <person name="Thangavelu M."/>
            <person name="Johnson D."/>
            <person name="Knights A."/>
            <person name="Loulseged H."/>
            <person name="Mungall K.L."/>
            <person name="Oliver K."/>
            <person name="Price C."/>
            <person name="Quail M.A."/>
            <person name="Urushihara H."/>
            <person name="Hernandez J."/>
            <person name="Rabbinowitsch E."/>
            <person name="Steffen D."/>
            <person name="Sanders M."/>
            <person name="Ma J."/>
            <person name="Kohara Y."/>
            <person name="Sharp S."/>
            <person name="Simmonds M.N."/>
            <person name="Spiegler S."/>
            <person name="Tivey A."/>
            <person name="Sugano S."/>
            <person name="White B."/>
            <person name="Walker D."/>
            <person name="Woodward J.R."/>
            <person name="Winckler T."/>
            <person name="Tanaka Y."/>
            <person name="Shaulsky G."/>
            <person name="Schleicher M."/>
            <person name="Weinstock G.M."/>
            <person name="Rosenthal A."/>
            <person name="Cox E.C."/>
            <person name="Chisholm R.L."/>
            <person name="Gibbs R.A."/>
            <person name="Loomis W.F."/>
            <person name="Platzer M."/>
            <person name="Kay R.R."/>
            <person name="Williams J.G."/>
            <person name="Dear P.H."/>
            <person name="Noegel A.A."/>
            <person name="Barrell B.G."/>
            <person name="Kuspa A."/>
        </authorList>
    </citation>
    <scope>NUCLEOTIDE SEQUENCE [LARGE SCALE GENOMIC DNA]</scope>
    <source>
        <strain>AX4</strain>
    </source>
</reference>
<protein>
    <recommendedName>
        <fullName>Probable cytochrome P450 513D1</fullName>
        <ecNumber>1.14.-.-</ecNumber>
    </recommendedName>
</protein>
<feature type="chain" id="PRO_0000318817" description="Probable cytochrome P450 513D1">
    <location>
        <begin position="1"/>
        <end position="519"/>
    </location>
</feature>
<feature type="transmembrane region" description="Helical" evidence="2">
    <location>
        <begin position="1"/>
        <end position="21"/>
    </location>
</feature>
<feature type="binding site" description="axial binding residue" evidence="1">
    <location>
        <position position="464"/>
    </location>
    <ligand>
        <name>heme</name>
        <dbReference type="ChEBI" id="CHEBI:30413"/>
    </ligand>
    <ligandPart>
        <name>Fe</name>
        <dbReference type="ChEBI" id="CHEBI:18248"/>
    </ligandPart>
</feature>
<accession>Q54WB9</accession>
<sequence>MGISSIIIILFIIVLLKKLIKKEDRIHRINKNIPGPKSKLLVGNLFDLKGQVHEKLKEWYEQYGSVYRIEFGSVSTVVLTEYATLKEAFVDNGEIFQSRFQRKSRTTCNKGLNLANSNGEYFNHLKKTLSNEITNQKMKKNEKIIKIQVGLLSEFFNEISGGGGGGSGGSGISKEPINNIIKMYSLNVMLSLLFNIHFPYNNNSYQDELMSTITRYFKSTGLPYPSDFIPILYPFLKNKPKEYFEDYESVKKLITRITNEYQLKHMTEISNKSTIEEIENYQPTNILESLLKQYRLNKIPYDGVIGCLMDLILAGSDTTGNTCLFSLVALVNNSNIQEKLFNEISNAFNDDDGDELNGANDISNSLLKLSYFSDRIKTPYLVAFIKEVKRYYPCAPLSVPHLLTEDCEIQGYKIAKGTQVIQNIYSTHLSQSFCSNPLEFSPERFLDSTNEPKIITFGIGQRKCPGENIFEIEIYIFLVYLIKKFKFSHPIDDNLQLNDRGQFGLSLQCPQLNIKVESR</sequence>
<gene>
    <name type="primary">cyp513D1</name>
    <name type="ORF">DDB_G0279763</name>
</gene>
<keyword id="KW-0349">Heme</keyword>
<keyword id="KW-0408">Iron</keyword>
<keyword id="KW-0472">Membrane</keyword>
<keyword id="KW-0479">Metal-binding</keyword>
<keyword id="KW-0503">Monooxygenase</keyword>
<keyword id="KW-0560">Oxidoreductase</keyword>
<keyword id="KW-1185">Reference proteome</keyword>
<keyword id="KW-0812">Transmembrane</keyword>
<keyword id="KW-1133">Transmembrane helix</keyword>
<comment type="cofactor">
    <cofactor evidence="1">
        <name>heme</name>
        <dbReference type="ChEBI" id="CHEBI:30413"/>
    </cofactor>
</comment>
<comment type="subcellular location">
    <subcellularLocation>
        <location evidence="3">Membrane</location>
        <topology evidence="3">Single-pass membrane protein</topology>
    </subcellularLocation>
</comment>
<comment type="similarity">
    <text evidence="3">Belongs to the cytochrome P450 family.</text>
</comment>
<organism>
    <name type="scientific">Dictyostelium discoideum</name>
    <name type="common">Social amoeba</name>
    <dbReference type="NCBI Taxonomy" id="44689"/>
    <lineage>
        <taxon>Eukaryota</taxon>
        <taxon>Amoebozoa</taxon>
        <taxon>Evosea</taxon>
        <taxon>Eumycetozoa</taxon>
        <taxon>Dictyostelia</taxon>
        <taxon>Dictyosteliales</taxon>
        <taxon>Dictyosteliaceae</taxon>
        <taxon>Dictyostelium</taxon>
    </lineage>
</organism>